<dbReference type="EC" id="3.4.25.1" evidence="1"/>
<dbReference type="EMBL" id="DP000238">
    <property type="protein sequence ID" value="ABK76903.1"/>
    <property type="molecule type" value="Genomic_DNA"/>
</dbReference>
<dbReference type="SMR" id="A0RU86"/>
<dbReference type="STRING" id="414004.CENSYa_0261"/>
<dbReference type="EnsemblBacteria" id="ABK76903">
    <property type="protein sequence ID" value="ABK76903"/>
    <property type="gene ID" value="CENSYa_0261"/>
</dbReference>
<dbReference type="KEGG" id="csy:CENSYa_0261"/>
<dbReference type="PATRIC" id="fig|414004.10.peg.228"/>
<dbReference type="HOGENOM" id="CLU_035750_7_2_2"/>
<dbReference type="Proteomes" id="UP000000758">
    <property type="component" value="Chromosome"/>
</dbReference>
<dbReference type="GO" id="GO:0005737">
    <property type="term" value="C:cytoplasm"/>
    <property type="evidence" value="ECO:0007669"/>
    <property type="project" value="UniProtKB-SubCell"/>
</dbReference>
<dbReference type="GO" id="GO:0019774">
    <property type="term" value="C:proteasome core complex, beta-subunit complex"/>
    <property type="evidence" value="ECO:0007669"/>
    <property type="project" value="UniProtKB-UniRule"/>
</dbReference>
<dbReference type="GO" id="GO:0004298">
    <property type="term" value="F:threonine-type endopeptidase activity"/>
    <property type="evidence" value="ECO:0007669"/>
    <property type="project" value="UniProtKB-UniRule"/>
</dbReference>
<dbReference type="GO" id="GO:0010498">
    <property type="term" value="P:proteasomal protein catabolic process"/>
    <property type="evidence" value="ECO:0007669"/>
    <property type="project" value="UniProtKB-UniRule"/>
</dbReference>
<dbReference type="Gene3D" id="3.60.20.10">
    <property type="entry name" value="Glutamine Phosphoribosylpyrophosphate, subunit 1, domain 1"/>
    <property type="match status" value="1"/>
</dbReference>
<dbReference type="HAMAP" id="MF_02113_A">
    <property type="entry name" value="Proteasome_B_A"/>
    <property type="match status" value="1"/>
</dbReference>
<dbReference type="InterPro" id="IPR029055">
    <property type="entry name" value="Ntn_hydrolases_N"/>
</dbReference>
<dbReference type="InterPro" id="IPR019983">
    <property type="entry name" value="Pept_T1A_Psome_bsu_arc"/>
</dbReference>
<dbReference type="InterPro" id="IPR000243">
    <property type="entry name" value="Pept_T1A_subB"/>
</dbReference>
<dbReference type="InterPro" id="IPR016050">
    <property type="entry name" value="Proteasome_bsu_CS"/>
</dbReference>
<dbReference type="InterPro" id="IPR001353">
    <property type="entry name" value="Proteasome_sua/b"/>
</dbReference>
<dbReference type="InterPro" id="IPR023333">
    <property type="entry name" value="Proteasome_suB-type"/>
</dbReference>
<dbReference type="PANTHER" id="PTHR32194:SF0">
    <property type="entry name" value="ATP-DEPENDENT PROTEASE SUBUNIT HSLV"/>
    <property type="match status" value="1"/>
</dbReference>
<dbReference type="PANTHER" id="PTHR32194">
    <property type="entry name" value="METALLOPROTEASE TLDD"/>
    <property type="match status" value="1"/>
</dbReference>
<dbReference type="Pfam" id="PF00227">
    <property type="entry name" value="Proteasome"/>
    <property type="match status" value="1"/>
</dbReference>
<dbReference type="PRINTS" id="PR00141">
    <property type="entry name" value="PROTEASOME"/>
</dbReference>
<dbReference type="SUPFAM" id="SSF56235">
    <property type="entry name" value="N-terminal nucleophile aminohydrolases (Ntn hydrolases)"/>
    <property type="match status" value="1"/>
</dbReference>
<dbReference type="PROSITE" id="PS00854">
    <property type="entry name" value="PROTEASOME_BETA_1"/>
    <property type="match status" value="1"/>
</dbReference>
<dbReference type="PROSITE" id="PS51476">
    <property type="entry name" value="PROTEASOME_BETA_2"/>
    <property type="match status" value="1"/>
</dbReference>
<keyword id="KW-0068">Autocatalytic cleavage</keyword>
<keyword id="KW-0963">Cytoplasm</keyword>
<keyword id="KW-0378">Hydrolase</keyword>
<keyword id="KW-0645">Protease</keyword>
<keyword id="KW-0647">Proteasome</keyword>
<keyword id="KW-1185">Reference proteome</keyword>
<keyword id="KW-0888">Threonine protease</keyword>
<keyword id="KW-0865">Zymogen</keyword>
<gene>
    <name evidence="1" type="primary">psmB1</name>
    <name type="ordered locus">CENSYa_0261</name>
</gene>
<proteinExistence type="inferred from homology"/>
<comment type="function">
    <text evidence="1">Component of the proteasome core, a large protease complex with broad specificity involved in protein degradation.</text>
</comment>
<comment type="catalytic activity">
    <reaction evidence="1">
        <text>Cleavage of peptide bonds with very broad specificity.</text>
        <dbReference type="EC" id="3.4.25.1"/>
    </reaction>
</comment>
<comment type="activity regulation">
    <text evidence="1">The formation of the proteasomal ATPase PAN-20S proteasome complex, via the docking of the C-termini of PAN into the intersubunit pockets in the alpha-rings, triggers opening of the gate for substrate entry. Interconversion between the open-gate and close-gate conformations leads to a dynamic regulation of the 20S proteasome proteolysis activity.</text>
</comment>
<comment type="subunit">
    <text evidence="1">The 20S proteasome core is composed of 14 alpha and 14 beta subunits that assemble into four stacked heptameric rings, resulting in a barrel-shaped structure. The two inner rings, each composed of seven catalytic beta subunits, are sandwiched by two outer rings, each composed of seven alpha subunits. The catalytic chamber with the active sites is on the inside of the barrel. Has a gated structure, the ends of the cylinder being occluded by the N-termini of the alpha-subunits. Is capped at one or both ends by the proteasome regulatory ATPase, PAN.</text>
</comment>
<comment type="subcellular location">
    <subcellularLocation>
        <location evidence="1">Cytoplasm</location>
    </subcellularLocation>
</comment>
<comment type="similarity">
    <text evidence="1">Belongs to the peptidase T1B family.</text>
</comment>
<accession>A0RU86</accession>
<organism>
    <name type="scientific">Cenarchaeum symbiosum (strain A)</name>
    <dbReference type="NCBI Taxonomy" id="414004"/>
    <lineage>
        <taxon>Archaea</taxon>
        <taxon>Nitrososphaerota</taxon>
        <taxon>Candidatus Cenarchaeales</taxon>
        <taxon>Candidatus Cenarchaeaceae</taxon>
        <taxon>Candidatus Cenarchaeum</taxon>
    </lineage>
</organism>
<name>PSB1_CENSY</name>
<sequence length="193" mass="20333">MPGATAVGITYAGGVILASEKRIAYGNFLVSKNTRKTFQITPYVGAACAGLVADMQILSLQISALAKIRKMDLKRDIPPNSVAKMMSNMMYERRFFPLLTQVIVGGVVGEPAIYTLDSLGSVLPDEYAAVGTGAEMALGVLDPQFKSGMSEKDAVDLAVRGIRSAALRDSFSGDGLDILALDANGAREIAQAA</sequence>
<evidence type="ECO:0000255" key="1">
    <source>
        <dbReference type="HAMAP-Rule" id="MF_02113"/>
    </source>
</evidence>
<protein>
    <recommendedName>
        <fullName evidence="1">Proteasome subunit beta 1</fullName>
        <ecNumber evidence="1">3.4.25.1</ecNumber>
    </recommendedName>
    <alternativeName>
        <fullName evidence="1">20S proteasome beta subunit 1</fullName>
    </alternativeName>
    <alternativeName>
        <fullName evidence="1">Proteasome core protein PsmB 1</fullName>
    </alternativeName>
</protein>
<feature type="propeptide" id="PRO_0000397284" description="Removed in mature form; by autocatalysis" evidence="1">
    <location>
        <begin position="1"/>
        <end position="4"/>
    </location>
</feature>
<feature type="chain" id="PRO_0000397285" description="Proteasome subunit beta 1">
    <location>
        <begin position="5"/>
        <end position="193"/>
    </location>
</feature>
<feature type="active site" description="Nucleophile" evidence="1">
    <location>
        <position position="5"/>
    </location>
</feature>
<reference key="1">
    <citation type="journal article" date="2006" name="Proc. Natl. Acad. Sci. U.S.A.">
        <title>Genomic analysis of the uncultivated marine crenarchaeote Cenarchaeum symbiosum.</title>
        <authorList>
            <person name="Hallam S.J."/>
            <person name="Konstantinidis K.T."/>
            <person name="Putnam N."/>
            <person name="Schleper C."/>
            <person name="Watanabe Y."/>
            <person name="Sugahara J."/>
            <person name="Preston C."/>
            <person name="de la Torre J."/>
            <person name="Richardson P.M."/>
            <person name="DeLong E.F."/>
        </authorList>
    </citation>
    <scope>NUCLEOTIDE SEQUENCE [LARGE SCALE GENOMIC DNA]</scope>
    <source>
        <strain>A</strain>
    </source>
</reference>